<gene>
    <name type="primary">CRA1</name>
    <name type="synonym">CRU1</name>
    <name type="synonym">CRU4</name>
    <name type="ordered locus">At5g44120</name>
    <name type="ORF">MLN1.4</name>
</gene>
<reference key="1">
    <citation type="journal article" date="1988" name="Plant Mol. Biol.">
        <title>Molecular cloning, genome organization, expression and evolution of 12S seed storage protein genes of Arabidopsis thaliana.</title>
        <authorList>
            <person name="Pang P.P."/>
            <person name="Pruitt R.E."/>
            <person name="Meyerowitz E.M."/>
        </authorList>
        <dbReference type="AGRICOLA" id="IND91035197"/>
    </citation>
    <scope>NUCLEOTIDE SEQUENCE [GENOMIC DNA]</scope>
    <scope>DEVELOPMENTAL STAGE</scope>
    <source>
        <strain>cv. Columbia</strain>
        <strain>cv. Landsberg erecta</strain>
    </source>
</reference>
<reference key="2">
    <citation type="journal article" date="1997" name="DNA Res.">
        <title>Structural analysis of Arabidopsis thaliana chromosome 5. I. Sequence features of the 1.6 Mb regions covered by twenty physically assigned P1 clones.</title>
        <authorList>
            <person name="Sato S."/>
            <person name="Kotani H."/>
            <person name="Nakamura Y."/>
            <person name="Kaneko T."/>
            <person name="Asamizu E."/>
            <person name="Fukami M."/>
            <person name="Miyajima N."/>
            <person name="Tabata S."/>
        </authorList>
    </citation>
    <scope>NUCLEOTIDE SEQUENCE [LARGE SCALE GENOMIC DNA]</scope>
    <source>
        <strain>cv. Columbia</strain>
    </source>
</reference>
<reference key="3">
    <citation type="journal article" date="2017" name="Plant J.">
        <title>Araport11: a complete reannotation of the Arabidopsis thaliana reference genome.</title>
        <authorList>
            <person name="Cheng C.Y."/>
            <person name="Krishnakumar V."/>
            <person name="Chan A.P."/>
            <person name="Thibaud-Nissen F."/>
            <person name="Schobel S."/>
            <person name="Town C.D."/>
        </authorList>
    </citation>
    <scope>GENOME REANNOTATION</scope>
    <source>
        <strain>cv. Columbia</strain>
    </source>
</reference>
<reference key="4">
    <citation type="journal article" date="2003" name="Science">
        <title>Empirical analysis of transcriptional activity in the Arabidopsis genome.</title>
        <authorList>
            <person name="Yamada K."/>
            <person name="Lim J."/>
            <person name="Dale J.M."/>
            <person name="Chen H."/>
            <person name="Shinn P."/>
            <person name="Palm C.J."/>
            <person name="Southwick A.M."/>
            <person name="Wu H.C."/>
            <person name="Kim C.J."/>
            <person name="Nguyen M."/>
            <person name="Pham P.K."/>
            <person name="Cheuk R.F."/>
            <person name="Karlin-Newmann G."/>
            <person name="Liu S.X."/>
            <person name="Lam B."/>
            <person name="Sakano H."/>
            <person name="Wu T."/>
            <person name="Yu G."/>
            <person name="Miranda M."/>
            <person name="Quach H.L."/>
            <person name="Tripp M."/>
            <person name="Chang C.H."/>
            <person name="Lee J.M."/>
            <person name="Toriumi M.J."/>
            <person name="Chan M.M."/>
            <person name="Tang C.C."/>
            <person name="Onodera C.S."/>
            <person name="Deng J.M."/>
            <person name="Akiyama K."/>
            <person name="Ansari Y."/>
            <person name="Arakawa T."/>
            <person name="Banh J."/>
            <person name="Banno F."/>
            <person name="Bowser L."/>
            <person name="Brooks S.Y."/>
            <person name="Carninci P."/>
            <person name="Chao Q."/>
            <person name="Choy N."/>
            <person name="Enju A."/>
            <person name="Goldsmith A.D."/>
            <person name="Gurjal M."/>
            <person name="Hansen N.F."/>
            <person name="Hayashizaki Y."/>
            <person name="Johnson-Hopson C."/>
            <person name="Hsuan V.W."/>
            <person name="Iida K."/>
            <person name="Karnes M."/>
            <person name="Khan S."/>
            <person name="Koesema E."/>
            <person name="Ishida J."/>
            <person name="Jiang P.X."/>
            <person name="Jones T."/>
            <person name="Kawai J."/>
            <person name="Kamiya A."/>
            <person name="Meyers C."/>
            <person name="Nakajima M."/>
            <person name="Narusaka M."/>
            <person name="Seki M."/>
            <person name="Sakurai T."/>
            <person name="Satou M."/>
            <person name="Tamse R."/>
            <person name="Vaysberg M."/>
            <person name="Wallender E.K."/>
            <person name="Wong C."/>
            <person name="Yamamura Y."/>
            <person name="Yuan S."/>
            <person name="Shinozaki K."/>
            <person name="Davis R.W."/>
            <person name="Theologis A."/>
            <person name="Ecker J.R."/>
        </authorList>
    </citation>
    <scope>NUCLEOTIDE SEQUENCE [LARGE SCALE MRNA] (ISOFORM 1)</scope>
    <source>
        <strain>cv. Columbia</strain>
    </source>
</reference>
<reference key="5">
    <citation type="submission" date="2006-12" db="EMBL/GenBank/DDBJ databases">
        <title>Arabidopsis ORF clones.</title>
        <authorList>
            <person name="Bautista V.R."/>
            <person name="Kim C.J."/>
            <person name="Chen H."/>
            <person name="Quinitio C."/>
            <person name="Ecker J.R."/>
        </authorList>
    </citation>
    <scope>NUCLEOTIDE SEQUENCE [LARGE SCALE MRNA] (ISOFORM 2)</scope>
    <source>
        <strain>cv. Columbia</strain>
    </source>
</reference>
<reference key="6">
    <citation type="journal article" date="2004" name="Plant Cell">
        <title>Storage protein accumulation in the absence of the vacuolar processing enzyme family of cysteine proteases.</title>
        <authorList>
            <person name="Gruis D."/>
            <person name="Schulze J."/>
            <person name="Jung R."/>
        </authorList>
    </citation>
    <scope>PROTEIN SEQUENCE OF 126-134</scope>
    <scope>PROTEOLYSIS</scope>
</reference>
<reference key="7">
    <citation type="submission" date="2005-03" db="EMBL/GenBank/DDBJ databases">
        <title>Large-scale analysis of RIKEN Arabidopsis full-length (RAFL) cDNAs.</title>
        <authorList>
            <person name="Totoki Y."/>
            <person name="Seki M."/>
            <person name="Ishida J."/>
            <person name="Nakajima M."/>
            <person name="Enju A."/>
            <person name="Kamiya A."/>
            <person name="Narusaka M."/>
            <person name="Shin-i T."/>
            <person name="Nakagawa M."/>
            <person name="Sakamoto N."/>
            <person name="Oishi K."/>
            <person name="Kohara Y."/>
            <person name="Kobayashi M."/>
            <person name="Toyoda A."/>
            <person name="Sakaki Y."/>
            <person name="Sakurai T."/>
            <person name="Iida K."/>
            <person name="Akiyama K."/>
            <person name="Satou M."/>
            <person name="Toyoda T."/>
            <person name="Konagaya A."/>
            <person name="Carninci P."/>
            <person name="Kawai J."/>
            <person name="Hayashizaki Y."/>
            <person name="Shinozaki K."/>
        </authorList>
    </citation>
    <scope>NUCLEOTIDE SEQUENCE [LARGE SCALE MRNA] OF 353-472 (ISOFORM 1/2)</scope>
    <source>
        <strain>cv. Columbia</strain>
    </source>
</reference>
<reference key="8">
    <citation type="journal article" date="1993" name="Plant J.">
        <title>An inventory of 1152 expressed sequence tags obtained by partial sequencing of cDNAs from Arabidopsis thaliana.</title>
        <authorList>
            <person name="Hoefte H."/>
            <person name="Desprez T."/>
            <person name="Amselem J."/>
            <person name="Chiapello H."/>
            <person name="Rouze P."/>
            <person name="Caboche M."/>
            <person name="Moisan A."/>
            <person name="Jourjon M.-F."/>
            <person name="Charpenteau J.-L."/>
            <person name="Berthomieu P."/>
            <person name="Guerrier D."/>
            <person name="Giraudat J."/>
            <person name="Quigley F."/>
            <person name="Thomas F."/>
            <person name="Yu D.-Y."/>
            <person name="Mache R."/>
            <person name="Raynal M."/>
            <person name="Cooke R."/>
            <person name="Grellet F."/>
            <person name="Delseny M."/>
            <person name="Parmentier Y."/>
            <person name="de Marcillac G."/>
            <person name="Gigot C."/>
            <person name="Fleck J."/>
            <person name="Philipps G."/>
            <person name="Axelos M."/>
            <person name="Bardet C."/>
            <person name="Tremousaygue D."/>
            <person name="Lescure B."/>
        </authorList>
    </citation>
    <scope>NUCLEOTIDE SEQUENCE [LARGE SCALE MRNA] OF 420-472 (ISOFORM 1/2)</scope>
    <source>
        <strain>cv. Columbia</strain>
        <tissue>Green siliques</tissue>
    </source>
</reference>
<reference key="9">
    <citation type="journal article" date="2002" name="Plant Cell">
        <title>Redundant proteolytic mechanisms process seed storage proteins in the absence of seed-type members of the vacuolar processing enzyme family of cysteine proteases.</title>
        <authorList>
            <person name="Gruis D.F."/>
            <person name="Selinger D.A."/>
            <person name="Curran J.M."/>
            <person name="Jung R."/>
        </authorList>
    </citation>
    <scope>IDENTIFICATION BY MASS SPECTROMETRY</scope>
    <scope>TISSUE SPECIFICITY</scope>
</reference>
<reference key="10">
    <citation type="journal article" date="2007" name="Biochem. J.">
        <title>Phosphorylation of the 12 S globulin cruciferin in wild-type and abi1-1 mutant Arabidopsis thaliana (thale cress) seeds.</title>
        <authorList>
            <person name="Wan L."/>
            <person name="Ross A.R."/>
            <person name="Yang J."/>
            <person name="Hegedus D.D."/>
            <person name="Kermode A.R."/>
        </authorList>
    </citation>
    <scope>IDENTIFICATION BY MASS SPECTROMETRY</scope>
    <scope>PHOSPHORYLATION AT THR-115; TYR-312 AND SER-314</scope>
    <scope>NOMENCLATURE</scope>
</reference>
<reference key="11">
    <citation type="journal article" date="2007" name="J. Biochem. Mol. Biol.">
        <title>Systematic studies of 12S seed storage protein accumulation and degradation patterns during Arabidopsis seed maturation and early seedling germination stages.</title>
        <authorList>
            <person name="Li Q."/>
            <person name="Wang B.-C."/>
            <person name="Xu Y."/>
            <person name="Zhu Y.-X."/>
        </authorList>
    </citation>
    <scope>PROTEOLYSIS</scope>
    <scope>DEVELOPMENTAL STAGE</scope>
    <scope>TISSUE SPECIFICITY</scope>
</reference>
<reference key="12">
    <citation type="journal article" date="2008" name="Plant Physiol.">
        <title>Protein tyrosine kinases and protein tyrosine phosphatases are involved in abscisic acid-dependent processes in Arabidopsis seeds and suspension cells.</title>
        <authorList>
            <person name="Ghelis T."/>
            <person name="Bolbach G."/>
            <person name="Clodic G."/>
            <person name="Habricot Y."/>
            <person name="Miginiac E."/>
            <person name="Sotta B."/>
            <person name="Jeannette E."/>
        </authorList>
    </citation>
    <scope>IDENTIFICATION BY MASS SPECTROMETRY</scope>
    <scope>PHOSPHORYLATION</scope>
</reference>
<reference key="13">
    <citation type="journal article" date="2009" name="J. Proteomics">
        <title>Phosphoproteomic analysis of nuclei-enriched fractions from Arabidopsis thaliana.</title>
        <authorList>
            <person name="Jones A.M.E."/>
            <person name="MacLean D."/>
            <person name="Studholme D.J."/>
            <person name="Serna-Sanz A."/>
            <person name="Andreasson E."/>
            <person name="Rathjen J.P."/>
            <person name="Peck S.C."/>
        </authorList>
    </citation>
    <scope>IDENTIFICATION BY MASS SPECTROMETRY [LARGE SCALE ANALYSIS]</scope>
    <source>
        <strain>cv. Columbia</strain>
    </source>
</reference>
<sequence>MARVSSLLSFCLTLLILFHGYAAQQGQQGQQFPNECQLDQLNALEPSHVLKSEAGRIEVWDHHAPQLRCSGVSFARYIIESKGLYLPSFFNTAKLSFVAKGRGLMGKVIPGCAETFQDSSEFQPRFEGQGQSQRFRDMHQKVEHIRSGDTIATTPGVAQWFYNDGQEPLVIVSVFDLASHQNQLDRNPRPFYLAGNNPQGQVWLQGREQQPQKNIFNGFGPEVIAQALKIDLQTAQQLQNQDDNRGNIVRVQGPFGVIRPPLRGQRPQEEEEEEGRHGRHGNGLEETICSARCTDNLDDPSRADVYKPQLGYISTLNSYDLPILRFIRLSALRGSIRQNAMVLPQWNANANAILYVTDGEAQIQIVNDNGNRVFDGQVSQGQLIAVPQGFSVVKRATSNRFQWVEFKTNANAQINTLAGRTSVLRGLPLEVITNGFQISPEEARRVKFNTLETTLTHSSGPASYGRPRVAAA</sequence>
<keyword id="KW-0002">3D-structure</keyword>
<keyword id="KW-0025">Alternative splicing</keyword>
<keyword id="KW-0903">Direct protein sequencing</keyword>
<keyword id="KW-1015">Disulfide bond</keyword>
<keyword id="KW-0597">Phosphoprotein</keyword>
<keyword id="KW-1185">Reference proteome</keyword>
<keyword id="KW-0708">Seed storage protein</keyword>
<keyword id="KW-0732">Signal</keyword>
<keyword id="KW-0758">Storage protein</keyword>
<keyword id="KW-0926">Vacuole</keyword>
<dbReference type="EMBL" id="M37247">
    <property type="protein sequence ID" value="AAA32777.1"/>
    <property type="molecule type" value="Genomic_DNA"/>
</dbReference>
<dbReference type="EMBL" id="X14312">
    <property type="protein sequence ID" value="CAA32493.1"/>
    <property type="molecule type" value="Genomic_DNA"/>
</dbReference>
<dbReference type="EMBL" id="AB005239">
    <property type="protein sequence ID" value="BAB10979.1"/>
    <property type="molecule type" value="Genomic_DNA"/>
</dbReference>
<dbReference type="EMBL" id="CP002688">
    <property type="protein sequence ID" value="AED95062.1"/>
    <property type="molecule type" value="Genomic_DNA"/>
</dbReference>
<dbReference type="EMBL" id="CP002688">
    <property type="protein sequence ID" value="AED95064.1"/>
    <property type="molecule type" value="Genomic_DNA"/>
</dbReference>
<dbReference type="EMBL" id="AY070730">
    <property type="protein sequence ID" value="AAL50071.1"/>
    <property type="molecule type" value="mRNA"/>
</dbReference>
<dbReference type="EMBL" id="BT029491">
    <property type="protein sequence ID" value="ABL66748.1"/>
    <property type="molecule type" value="mRNA"/>
</dbReference>
<dbReference type="EMBL" id="AK221158">
    <property type="protein sequence ID" value="BAD95189.1"/>
    <property type="molecule type" value="mRNA"/>
</dbReference>
<dbReference type="EMBL" id="Z17590">
    <property type="protein sequence ID" value="CAA79005.1"/>
    <property type="molecule type" value="mRNA"/>
</dbReference>
<dbReference type="PIR" id="S08509">
    <property type="entry name" value="S08509"/>
</dbReference>
<dbReference type="RefSeq" id="NP_199225.1">
    <molecule id="P15455-1"/>
    <property type="nucleotide sequence ID" value="NM_123779.5"/>
</dbReference>
<dbReference type="RefSeq" id="NP_851128.1">
    <molecule id="P15455-2"/>
    <property type="nucleotide sequence ID" value="NM_180797.1"/>
</dbReference>
<dbReference type="PDB" id="7F2D">
    <property type="method" value="X-ray"/>
    <property type="resolution" value="2.45 A"/>
    <property type="chains" value="B=468-472"/>
</dbReference>
<dbReference type="PDB" id="7F2I">
    <property type="method" value="X-ray"/>
    <property type="resolution" value="2.35 A"/>
    <property type="chains" value="B=468-472"/>
</dbReference>
<dbReference type="PDBsum" id="7F2D"/>
<dbReference type="PDBsum" id="7F2I"/>
<dbReference type="SMR" id="P15455"/>
<dbReference type="BioGRID" id="19685">
    <property type="interactions" value="3"/>
</dbReference>
<dbReference type="FunCoup" id="P15455">
    <property type="interactions" value="109"/>
</dbReference>
<dbReference type="STRING" id="3702.P15455"/>
<dbReference type="iPTMnet" id="P15455"/>
<dbReference type="PaxDb" id="3702-AT5G44120.3"/>
<dbReference type="ProteomicsDB" id="220492">
    <molecule id="P15455-1"/>
</dbReference>
<dbReference type="EnsemblPlants" id="AT5G44120.2">
    <molecule id="P15455-2"/>
    <property type="protein sequence ID" value="AT5G44120.2"/>
    <property type="gene ID" value="AT5G44120"/>
</dbReference>
<dbReference type="EnsemblPlants" id="AT5G44120.3">
    <molecule id="P15455-1"/>
    <property type="protein sequence ID" value="AT5G44120.3"/>
    <property type="gene ID" value="AT5G44120"/>
</dbReference>
<dbReference type="GeneID" id="834435"/>
<dbReference type="Gramene" id="AT5G44120.2">
    <molecule id="P15455-2"/>
    <property type="protein sequence ID" value="AT5G44120.2"/>
    <property type="gene ID" value="AT5G44120"/>
</dbReference>
<dbReference type="Gramene" id="AT5G44120.3">
    <molecule id="P15455-1"/>
    <property type="protein sequence ID" value="AT5G44120.3"/>
    <property type="gene ID" value="AT5G44120"/>
</dbReference>
<dbReference type="KEGG" id="ath:AT5G44120"/>
<dbReference type="Araport" id="AT5G44120"/>
<dbReference type="TAIR" id="AT5G44120">
    <property type="gene designation" value="CRA1"/>
</dbReference>
<dbReference type="eggNOG" id="ENOG502QU1J">
    <property type="taxonomic scope" value="Eukaryota"/>
</dbReference>
<dbReference type="InParanoid" id="P15455"/>
<dbReference type="OMA" id="CEFAFDM"/>
<dbReference type="PhylomeDB" id="P15455"/>
<dbReference type="PRO" id="PR:P15455"/>
<dbReference type="Proteomes" id="UP000006548">
    <property type="component" value="Chromosome 5"/>
</dbReference>
<dbReference type="ExpressionAtlas" id="P15455">
    <property type="expression patterns" value="baseline and differential"/>
</dbReference>
<dbReference type="GO" id="GO:0000326">
    <property type="term" value="C:protein storage vacuole"/>
    <property type="evidence" value="ECO:0007669"/>
    <property type="project" value="UniProtKB-SubCell"/>
</dbReference>
<dbReference type="GO" id="GO:0045735">
    <property type="term" value="F:nutrient reservoir activity"/>
    <property type="evidence" value="ECO:0000314"/>
    <property type="project" value="UniProtKB"/>
</dbReference>
<dbReference type="GO" id="GO:0071215">
    <property type="term" value="P:cellular response to abscisic acid stimulus"/>
    <property type="evidence" value="ECO:0000314"/>
    <property type="project" value="UniProtKB"/>
</dbReference>
<dbReference type="GO" id="GO:0009737">
    <property type="term" value="P:response to abscisic acid"/>
    <property type="evidence" value="ECO:0000270"/>
    <property type="project" value="TAIR"/>
</dbReference>
<dbReference type="GO" id="GO:0010431">
    <property type="term" value="P:seed maturation"/>
    <property type="evidence" value="ECO:0000314"/>
    <property type="project" value="UniProtKB"/>
</dbReference>
<dbReference type="CDD" id="cd02243">
    <property type="entry name" value="cupin_11S_legumin_C"/>
    <property type="match status" value="1"/>
</dbReference>
<dbReference type="CDD" id="cd02242">
    <property type="entry name" value="cupin_11S_legumin_N"/>
    <property type="match status" value="1"/>
</dbReference>
<dbReference type="FunFam" id="2.60.120.10:FF:000073">
    <property type="entry name" value="Glycinin G1"/>
    <property type="match status" value="1"/>
</dbReference>
<dbReference type="FunFam" id="2.60.120.10:FF:000124">
    <property type="entry name" value="Glycinin G5"/>
    <property type="match status" value="1"/>
</dbReference>
<dbReference type="Gene3D" id="2.60.120.10">
    <property type="entry name" value="Jelly Rolls"/>
    <property type="match status" value="2"/>
</dbReference>
<dbReference type="InterPro" id="IPR022379">
    <property type="entry name" value="11S_seedstore_CS"/>
</dbReference>
<dbReference type="InterPro" id="IPR006044">
    <property type="entry name" value="11S_seedstore_pln"/>
</dbReference>
<dbReference type="InterPro" id="IPR006045">
    <property type="entry name" value="Cupin_1"/>
</dbReference>
<dbReference type="InterPro" id="IPR014710">
    <property type="entry name" value="RmlC-like_jellyroll"/>
</dbReference>
<dbReference type="InterPro" id="IPR011051">
    <property type="entry name" value="RmlC_Cupin_sf"/>
</dbReference>
<dbReference type="InterPro" id="IPR050253">
    <property type="entry name" value="Seed_Storage-Functional"/>
</dbReference>
<dbReference type="PANTHER" id="PTHR31189:SF30">
    <property type="entry name" value="12S SEED STORAGE PROTEIN CRA1"/>
    <property type="match status" value="1"/>
</dbReference>
<dbReference type="PANTHER" id="PTHR31189">
    <property type="entry name" value="OS03G0336100 PROTEIN-RELATED"/>
    <property type="match status" value="1"/>
</dbReference>
<dbReference type="Pfam" id="PF00190">
    <property type="entry name" value="Cupin_1"/>
    <property type="match status" value="2"/>
</dbReference>
<dbReference type="PRINTS" id="PR00439">
    <property type="entry name" value="11SGLOBULIN"/>
</dbReference>
<dbReference type="SMART" id="SM00835">
    <property type="entry name" value="Cupin_1"/>
    <property type="match status" value="2"/>
</dbReference>
<dbReference type="SUPFAM" id="SSF51182">
    <property type="entry name" value="RmlC-like cupins"/>
    <property type="match status" value="1"/>
</dbReference>
<dbReference type="PROSITE" id="PS00305">
    <property type="entry name" value="11S_SEED_STORAGE"/>
    <property type="match status" value="1"/>
</dbReference>
<evidence type="ECO:0000250" key="1"/>
<evidence type="ECO:0000250" key="2">
    <source>
        <dbReference type="UniProtKB" id="P15456"/>
    </source>
</evidence>
<evidence type="ECO:0000255" key="3"/>
<evidence type="ECO:0000256" key="4">
    <source>
        <dbReference type="SAM" id="MobiDB-lite"/>
    </source>
</evidence>
<evidence type="ECO:0000269" key="5">
    <source>
    </source>
</evidence>
<evidence type="ECO:0000269" key="6">
    <source>
    </source>
</evidence>
<evidence type="ECO:0000269" key="7">
    <source>
    </source>
</evidence>
<evidence type="ECO:0000269" key="8">
    <source>
    </source>
</evidence>
<evidence type="ECO:0000269" key="9">
    <source ref="1"/>
</evidence>
<evidence type="ECO:0000303" key="10">
    <source ref="5"/>
</evidence>
<evidence type="ECO:0000305" key="11"/>
<accession>P15455</accession>
<accession>Q3E711</accession>
<accession>Q56Z11</accession>
<accession>Q9FFH7</accession>
<name>CRU1_ARATH</name>
<feature type="signal peptide" evidence="1">
    <location>
        <begin position="1"/>
        <end position="24"/>
    </location>
</feature>
<feature type="chain" id="PRO_0000031999" description="12S seed storage protein CRA1 alpha chain" evidence="1">
    <location>
        <begin position="25"/>
        <end position="282"/>
    </location>
</feature>
<feature type="chain" id="PRO_0000032000" description="12S seed storage protein CRA1 beta chain" evidence="1">
    <location>
        <begin position="283"/>
        <end position="472"/>
    </location>
</feature>
<feature type="domain" description="Cupin type-1 1" evidence="3">
    <location>
        <begin position="41"/>
        <end position="236"/>
    </location>
</feature>
<feature type="domain" description="Cupin type-1 2" evidence="3">
    <location>
        <begin position="295"/>
        <end position="444"/>
    </location>
</feature>
<feature type="region of interest" description="Disordered" evidence="4">
    <location>
        <begin position="259"/>
        <end position="283"/>
    </location>
</feature>
<feature type="modified residue" description="Phosphothreonine" evidence="6">
    <location>
        <position position="115"/>
    </location>
</feature>
<feature type="modified residue" description="Phosphotyrosine" evidence="6">
    <location>
        <position position="312"/>
    </location>
</feature>
<feature type="modified residue" description="Phosphoserine" evidence="6">
    <location>
        <position position="314"/>
    </location>
</feature>
<feature type="modified residue" description="Phosphothreonine" evidence="2">
    <location>
        <position position="408"/>
    </location>
</feature>
<feature type="modified residue" description="Phosphothreonine" evidence="2">
    <location>
        <position position="433"/>
    </location>
</feature>
<feature type="disulfide bond" evidence="1">
    <location>
        <begin position="36"/>
        <end position="69"/>
    </location>
</feature>
<feature type="disulfide bond" description="Interchain (between alpha and beta chains)" evidence="3">
    <location>
        <begin position="112"/>
        <end position="289"/>
    </location>
</feature>
<feature type="splice variant" id="VSP_026066" description="In isoform 2." evidence="10">
    <location>
        <begin position="1"/>
        <end position="104"/>
    </location>
</feature>
<feature type="sequence conflict" description="In Ref. 1; AAA32777/CAA32493." evidence="11" ref="1">
    <original>E</original>
    <variation>Q</variation>
    <location>
        <position position="167"/>
    </location>
</feature>
<feature type="sequence conflict" description="In Ref. 1; AAA32777/CAA32493." evidence="11" ref="1">
    <original>V</original>
    <variation>E</variation>
    <location>
        <position position="356"/>
    </location>
</feature>
<organism>
    <name type="scientific">Arabidopsis thaliana</name>
    <name type="common">Mouse-ear cress</name>
    <dbReference type="NCBI Taxonomy" id="3702"/>
    <lineage>
        <taxon>Eukaryota</taxon>
        <taxon>Viridiplantae</taxon>
        <taxon>Streptophyta</taxon>
        <taxon>Embryophyta</taxon>
        <taxon>Tracheophyta</taxon>
        <taxon>Spermatophyta</taxon>
        <taxon>Magnoliopsida</taxon>
        <taxon>eudicotyledons</taxon>
        <taxon>Gunneridae</taxon>
        <taxon>Pentapetalae</taxon>
        <taxon>rosids</taxon>
        <taxon>malvids</taxon>
        <taxon>Brassicales</taxon>
        <taxon>Brassicaceae</taxon>
        <taxon>Camelineae</taxon>
        <taxon>Arabidopsis</taxon>
    </lineage>
</organism>
<protein>
    <recommendedName>
        <fullName>12S seed storage protein CRA1</fullName>
    </recommendedName>
    <alternativeName>
        <fullName>Cruciferin 1</fullName>
        <shortName>AtCRU1</shortName>
    </alternativeName>
    <alternativeName>
        <fullName>Cruciferin A1</fullName>
    </alternativeName>
    <alternativeName>
        <fullName>Legumin-type globulin storage protein CRA1</fullName>
    </alternativeName>
    <component>
        <recommendedName>
            <fullName>12S seed storage protein CRA1 alpha chain</fullName>
        </recommendedName>
        <alternativeName>
            <fullName>12S seed storage protein CRA1 acidic chain</fullName>
        </alternativeName>
    </component>
    <component>
        <recommendedName>
            <fullName>12S seed storage protein CRA1 beta chain</fullName>
        </recommendedName>
        <alternativeName>
            <fullName>12S seed storage protein CRA1 basic chain</fullName>
        </alternativeName>
    </component>
</protein>
<comment type="function">
    <text>Seed storage protein.</text>
</comment>
<comment type="subunit">
    <text>Hexamer; each subunit is composed of an acidic and a basic chain derived from a single precursor and linked by a disulfide bond.</text>
</comment>
<comment type="subcellular location">
    <subcellularLocation>
        <location evidence="11">Protein storage vacuole</location>
    </subcellularLocation>
</comment>
<comment type="alternative products">
    <event type="alternative splicing"/>
    <isoform>
        <id>P15455-1</id>
        <name>1</name>
        <sequence type="displayed"/>
    </isoform>
    <isoform>
        <id>P15455-2</id>
        <name>2</name>
        <sequence type="described" ref="VSP_026066"/>
    </isoform>
</comment>
<comment type="tissue specificity">
    <text evidence="5 7">Accumulates in seeds 8 days after anthesis.</text>
</comment>
<comment type="developmental stage">
    <text evidence="7 9">Detected in siliques at nucleotide level from 6 days post anthesis (dpa) to 17 dpa. First observed in siliques at protein level 15 dpa and accumulates progressively as native isoforms or proteolytic fragments during the last week of seed maturation/desiccation. Present in dry seeds, essentially in cotyledons and hypocotyls, but disappears during their germination (at protein level).</text>
</comment>
<comment type="PTM">
    <text evidence="6 8">Phosphorylated in seeds on some Tyr residues in response to abscisic acid (ABA).</text>
</comment>
<comment type="PTM">
    <text>Proteolytically processed during seed maturation at a conserved Asn-Gly peptide bond by an asparaginyl endopeptidase to produce two mature polypeptides referred to as alpha and beta subunits that are joined together by a disulfide bond.</text>
</comment>
<comment type="similarity">
    <text evidence="11">Belongs to the 11S seed storage protein (globulins) family.</text>
</comment>
<proteinExistence type="evidence at protein level"/>